<gene>
    <name evidence="1" type="primary">murD</name>
    <name type="ordered locus">DSY2909</name>
</gene>
<proteinExistence type="inferred from homology"/>
<keyword id="KW-0067">ATP-binding</keyword>
<keyword id="KW-0131">Cell cycle</keyword>
<keyword id="KW-0132">Cell division</keyword>
<keyword id="KW-0133">Cell shape</keyword>
<keyword id="KW-0961">Cell wall biogenesis/degradation</keyword>
<keyword id="KW-0963">Cytoplasm</keyword>
<keyword id="KW-0436">Ligase</keyword>
<keyword id="KW-0547">Nucleotide-binding</keyword>
<keyword id="KW-0573">Peptidoglycan synthesis</keyword>
<keyword id="KW-1185">Reference proteome</keyword>
<reference key="1">
    <citation type="journal article" date="2006" name="J. Bacteriol.">
        <title>Complete genome sequence of the dehalorespiring bacterium Desulfitobacterium hafniense Y51 and comparison with Dehalococcoides ethenogenes 195.</title>
        <authorList>
            <person name="Nonaka H."/>
            <person name="Keresztes G."/>
            <person name="Shinoda Y."/>
            <person name="Ikenaga Y."/>
            <person name="Abe M."/>
            <person name="Naito K."/>
            <person name="Inatomi K."/>
            <person name="Furukawa K."/>
            <person name="Inui M."/>
            <person name="Yukawa H."/>
        </authorList>
    </citation>
    <scope>NUCLEOTIDE SEQUENCE [LARGE SCALE GENOMIC DNA]</scope>
    <source>
        <strain>Y51</strain>
    </source>
</reference>
<evidence type="ECO:0000255" key="1">
    <source>
        <dbReference type="HAMAP-Rule" id="MF_00639"/>
    </source>
</evidence>
<accession>Q24TE4</accession>
<dbReference type="EC" id="6.3.2.9" evidence="1"/>
<dbReference type="EMBL" id="AP008230">
    <property type="protein sequence ID" value="BAE84698.1"/>
    <property type="molecule type" value="Genomic_DNA"/>
</dbReference>
<dbReference type="RefSeq" id="WP_011460698.1">
    <property type="nucleotide sequence ID" value="NC_007907.1"/>
</dbReference>
<dbReference type="SMR" id="Q24TE4"/>
<dbReference type="STRING" id="138119.DSY2909"/>
<dbReference type="KEGG" id="dsy:DSY2909"/>
<dbReference type="eggNOG" id="COG0771">
    <property type="taxonomic scope" value="Bacteria"/>
</dbReference>
<dbReference type="HOGENOM" id="CLU_032540_0_0_9"/>
<dbReference type="UniPathway" id="UPA00219"/>
<dbReference type="Proteomes" id="UP000001946">
    <property type="component" value="Chromosome"/>
</dbReference>
<dbReference type="GO" id="GO:0005737">
    <property type="term" value="C:cytoplasm"/>
    <property type="evidence" value="ECO:0007669"/>
    <property type="project" value="UniProtKB-SubCell"/>
</dbReference>
<dbReference type="GO" id="GO:0005524">
    <property type="term" value="F:ATP binding"/>
    <property type="evidence" value="ECO:0007669"/>
    <property type="project" value="UniProtKB-UniRule"/>
</dbReference>
<dbReference type="GO" id="GO:0008764">
    <property type="term" value="F:UDP-N-acetylmuramoylalanine-D-glutamate ligase activity"/>
    <property type="evidence" value="ECO:0007669"/>
    <property type="project" value="UniProtKB-UniRule"/>
</dbReference>
<dbReference type="GO" id="GO:0051301">
    <property type="term" value="P:cell division"/>
    <property type="evidence" value="ECO:0007669"/>
    <property type="project" value="UniProtKB-KW"/>
</dbReference>
<dbReference type="GO" id="GO:0071555">
    <property type="term" value="P:cell wall organization"/>
    <property type="evidence" value="ECO:0007669"/>
    <property type="project" value="UniProtKB-KW"/>
</dbReference>
<dbReference type="GO" id="GO:0009252">
    <property type="term" value="P:peptidoglycan biosynthetic process"/>
    <property type="evidence" value="ECO:0007669"/>
    <property type="project" value="UniProtKB-UniRule"/>
</dbReference>
<dbReference type="GO" id="GO:0008360">
    <property type="term" value="P:regulation of cell shape"/>
    <property type="evidence" value="ECO:0007669"/>
    <property type="project" value="UniProtKB-KW"/>
</dbReference>
<dbReference type="Gene3D" id="3.90.190.20">
    <property type="entry name" value="Mur ligase, C-terminal domain"/>
    <property type="match status" value="1"/>
</dbReference>
<dbReference type="Gene3D" id="3.40.1190.10">
    <property type="entry name" value="Mur-like, catalytic domain"/>
    <property type="match status" value="1"/>
</dbReference>
<dbReference type="Gene3D" id="3.40.50.720">
    <property type="entry name" value="NAD(P)-binding Rossmann-like Domain"/>
    <property type="match status" value="1"/>
</dbReference>
<dbReference type="HAMAP" id="MF_00639">
    <property type="entry name" value="MurD"/>
    <property type="match status" value="1"/>
</dbReference>
<dbReference type="InterPro" id="IPR036565">
    <property type="entry name" value="Mur-like_cat_sf"/>
</dbReference>
<dbReference type="InterPro" id="IPR004101">
    <property type="entry name" value="Mur_ligase_C"/>
</dbReference>
<dbReference type="InterPro" id="IPR036615">
    <property type="entry name" value="Mur_ligase_C_dom_sf"/>
</dbReference>
<dbReference type="InterPro" id="IPR013221">
    <property type="entry name" value="Mur_ligase_cen"/>
</dbReference>
<dbReference type="InterPro" id="IPR005762">
    <property type="entry name" value="MurD"/>
</dbReference>
<dbReference type="NCBIfam" id="TIGR01087">
    <property type="entry name" value="murD"/>
    <property type="match status" value="1"/>
</dbReference>
<dbReference type="PANTHER" id="PTHR43692">
    <property type="entry name" value="UDP-N-ACETYLMURAMOYLALANINE--D-GLUTAMATE LIGASE"/>
    <property type="match status" value="1"/>
</dbReference>
<dbReference type="PANTHER" id="PTHR43692:SF1">
    <property type="entry name" value="UDP-N-ACETYLMURAMOYLALANINE--D-GLUTAMATE LIGASE"/>
    <property type="match status" value="1"/>
</dbReference>
<dbReference type="Pfam" id="PF02875">
    <property type="entry name" value="Mur_ligase_C"/>
    <property type="match status" value="1"/>
</dbReference>
<dbReference type="Pfam" id="PF08245">
    <property type="entry name" value="Mur_ligase_M"/>
    <property type="match status" value="1"/>
</dbReference>
<dbReference type="Pfam" id="PF21799">
    <property type="entry name" value="MurD-like_N"/>
    <property type="match status" value="1"/>
</dbReference>
<dbReference type="SUPFAM" id="SSF51984">
    <property type="entry name" value="MurCD N-terminal domain"/>
    <property type="match status" value="1"/>
</dbReference>
<dbReference type="SUPFAM" id="SSF53623">
    <property type="entry name" value="MurD-like peptide ligases, catalytic domain"/>
    <property type="match status" value="1"/>
</dbReference>
<dbReference type="SUPFAM" id="SSF53244">
    <property type="entry name" value="MurD-like peptide ligases, peptide-binding domain"/>
    <property type="match status" value="1"/>
</dbReference>
<organism>
    <name type="scientific">Desulfitobacterium hafniense (strain Y51)</name>
    <dbReference type="NCBI Taxonomy" id="138119"/>
    <lineage>
        <taxon>Bacteria</taxon>
        <taxon>Bacillati</taxon>
        <taxon>Bacillota</taxon>
        <taxon>Clostridia</taxon>
        <taxon>Eubacteriales</taxon>
        <taxon>Desulfitobacteriaceae</taxon>
        <taxon>Desulfitobacterium</taxon>
    </lineage>
</organism>
<feature type="chain" id="PRO_0000257186" description="UDP-N-acetylmuramoylalanine--D-glutamate ligase">
    <location>
        <begin position="1"/>
        <end position="454"/>
    </location>
</feature>
<feature type="binding site" evidence="1">
    <location>
        <begin position="114"/>
        <end position="120"/>
    </location>
    <ligand>
        <name>ATP</name>
        <dbReference type="ChEBI" id="CHEBI:30616"/>
    </ligand>
</feature>
<sequence length="454" mass="49305">MNLHEKKVLVVGAGRSGLAAVKRLKALGARIVLTDQKELAQLSGISELGLPDGQLVLGHIPQWHEVASEVIVLSPGVSPKLPFIQEGIAQGALIWSEVELALRDHPAFKIGVTGTNGKTTTTTLIGELAKRTGRPTLVAGNIGVALSDQVEDLDGEGIIVAELSSFQLEWVDSLRMNVGILLNVTPDHLDRHGTLDNYLAAKARIFEKQSPSDCAILNWDDARVRALAPHLKARVVFFSPTSLLAEGYGVRGDEVVLAEGGKITPIIARGELQLRGSHNLENIMAAIAAVRELGLSWEEITQGLRDFKGVEHRQEVVGTYEGILFINDSKGTNPDASEKALYAFEEPIVLIAGGKNKGLDFHDFMKTIKKQVKSLVLVGTAAAEMEQAAKDTGIQNYLRAGTFAEAVELAIAEAEPGDVVLLSPACTSWDMFKSYEERGEFFKELVRRHYREPI</sequence>
<name>MURD_DESHY</name>
<comment type="function">
    <text evidence="1">Cell wall formation. Catalyzes the addition of glutamate to the nucleotide precursor UDP-N-acetylmuramoyl-L-alanine (UMA).</text>
</comment>
<comment type="catalytic activity">
    <reaction evidence="1">
        <text>UDP-N-acetyl-alpha-D-muramoyl-L-alanine + D-glutamate + ATP = UDP-N-acetyl-alpha-D-muramoyl-L-alanyl-D-glutamate + ADP + phosphate + H(+)</text>
        <dbReference type="Rhea" id="RHEA:16429"/>
        <dbReference type="ChEBI" id="CHEBI:15378"/>
        <dbReference type="ChEBI" id="CHEBI:29986"/>
        <dbReference type="ChEBI" id="CHEBI:30616"/>
        <dbReference type="ChEBI" id="CHEBI:43474"/>
        <dbReference type="ChEBI" id="CHEBI:83898"/>
        <dbReference type="ChEBI" id="CHEBI:83900"/>
        <dbReference type="ChEBI" id="CHEBI:456216"/>
        <dbReference type="EC" id="6.3.2.9"/>
    </reaction>
</comment>
<comment type="pathway">
    <text evidence="1">Cell wall biogenesis; peptidoglycan biosynthesis.</text>
</comment>
<comment type="subcellular location">
    <subcellularLocation>
        <location evidence="1">Cytoplasm</location>
    </subcellularLocation>
</comment>
<comment type="similarity">
    <text evidence="1">Belongs to the MurCDEF family.</text>
</comment>
<protein>
    <recommendedName>
        <fullName evidence="1">UDP-N-acetylmuramoylalanine--D-glutamate ligase</fullName>
        <ecNumber evidence="1">6.3.2.9</ecNumber>
    </recommendedName>
    <alternativeName>
        <fullName evidence="1">D-glutamic acid-adding enzyme</fullName>
    </alternativeName>
    <alternativeName>
        <fullName evidence="1">UDP-N-acetylmuramoyl-L-alanyl-D-glutamate synthetase</fullName>
    </alternativeName>
</protein>